<proteinExistence type="inferred from homology"/>
<feature type="chain" id="PRO_0000290538" description="1-(5-phosphoribosyl)-5-[(5-phosphoribosylamino)methylideneamino] imidazole-4-carboxamide isomerase">
    <location>
        <begin position="1"/>
        <end position="245"/>
    </location>
</feature>
<feature type="active site" description="Proton acceptor" evidence="1">
    <location>
        <position position="7"/>
    </location>
</feature>
<feature type="active site" description="Proton donor" evidence="1">
    <location>
        <position position="129"/>
    </location>
</feature>
<gene>
    <name evidence="1" type="primary">hisA</name>
    <name type="ordered locus">Shewana3_1849</name>
</gene>
<dbReference type="EC" id="5.3.1.16" evidence="1"/>
<dbReference type="EMBL" id="CP000469">
    <property type="protein sequence ID" value="ABK48080.1"/>
    <property type="molecule type" value="Genomic_DNA"/>
</dbReference>
<dbReference type="RefSeq" id="WP_011716854.1">
    <property type="nucleotide sequence ID" value="NC_008577.1"/>
</dbReference>
<dbReference type="SMR" id="A0KWB1"/>
<dbReference type="STRING" id="94122.Shewana3_1849"/>
<dbReference type="KEGG" id="shn:Shewana3_1849"/>
<dbReference type="eggNOG" id="COG0106">
    <property type="taxonomic scope" value="Bacteria"/>
</dbReference>
<dbReference type="HOGENOM" id="CLU_048577_1_2_6"/>
<dbReference type="OrthoDB" id="9807749at2"/>
<dbReference type="UniPathway" id="UPA00031">
    <property type="reaction ID" value="UER00009"/>
</dbReference>
<dbReference type="Proteomes" id="UP000002589">
    <property type="component" value="Chromosome"/>
</dbReference>
<dbReference type="GO" id="GO:0005737">
    <property type="term" value="C:cytoplasm"/>
    <property type="evidence" value="ECO:0007669"/>
    <property type="project" value="UniProtKB-SubCell"/>
</dbReference>
<dbReference type="GO" id="GO:0003949">
    <property type="term" value="F:1-(5-phosphoribosyl)-5-[(5-phosphoribosylamino)methylideneamino]imidazole-4-carboxamide isomerase activity"/>
    <property type="evidence" value="ECO:0007669"/>
    <property type="project" value="UniProtKB-UniRule"/>
</dbReference>
<dbReference type="GO" id="GO:0000105">
    <property type="term" value="P:L-histidine biosynthetic process"/>
    <property type="evidence" value="ECO:0007669"/>
    <property type="project" value="UniProtKB-UniRule"/>
</dbReference>
<dbReference type="GO" id="GO:0000162">
    <property type="term" value="P:L-tryptophan biosynthetic process"/>
    <property type="evidence" value="ECO:0007669"/>
    <property type="project" value="TreeGrafter"/>
</dbReference>
<dbReference type="CDD" id="cd04732">
    <property type="entry name" value="HisA"/>
    <property type="match status" value="1"/>
</dbReference>
<dbReference type="FunFam" id="3.20.20.70:FF:000009">
    <property type="entry name" value="1-(5-phosphoribosyl)-5-[(5-phosphoribosylamino)methylideneamino] imidazole-4-carboxamide isomerase"/>
    <property type="match status" value="1"/>
</dbReference>
<dbReference type="Gene3D" id="3.20.20.70">
    <property type="entry name" value="Aldolase class I"/>
    <property type="match status" value="1"/>
</dbReference>
<dbReference type="HAMAP" id="MF_01014">
    <property type="entry name" value="HisA"/>
    <property type="match status" value="1"/>
</dbReference>
<dbReference type="InterPro" id="IPR013785">
    <property type="entry name" value="Aldolase_TIM"/>
</dbReference>
<dbReference type="InterPro" id="IPR006062">
    <property type="entry name" value="His_biosynth"/>
</dbReference>
<dbReference type="InterPro" id="IPR006063">
    <property type="entry name" value="HisA_bact_arch"/>
</dbReference>
<dbReference type="InterPro" id="IPR044524">
    <property type="entry name" value="Isoase_HisA-like"/>
</dbReference>
<dbReference type="InterPro" id="IPR023016">
    <property type="entry name" value="Isoase_HisA-like_bact"/>
</dbReference>
<dbReference type="InterPro" id="IPR011060">
    <property type="entry name" value="RibuloseP-bd_barrel"/>
</dbReference>
<dbReference type="NCBIfam" id="TIGR00007">
    <property type="entry name" value="1-(5-phosphoribosyl)-5-[(5-phosphoribosylamino)methylideneamino]imidazole-4-carboxamide isomerase"/>
    <property type="match status" value="1"/>
</dbReference>
<dbReference type="PANTHER" id="PTHR43090">
    <property type="entry name" value="1-(5-PHOSPHORIBOSYL)-5-[(5-PHOSPHORIBOSYLAMINO)METHYLIDENEAMINO] IMIDAZOLE-4-CARBOXAMIDE ISOMERASE"/>
    <property type="match status" value="1"/>
</dbReference>
<dbReference type="PANTHER" id="PTHR43090:SF2">
    <property type="entry name" value="1-(5-PHOSPHORIBOSYL)-5-[(5-PHOSPHORIBOSYLAMINO)METHYLIDENEAMINO] IMIDAZOLE-4-CARBOXAMIDE ISOMERASE"/>
    <property type="match status" value="1"/>
</dbReference>
<dbReference type="Pfam" id="PF00977">
    <property type="entry name" value="His_biosynth"/>
    <property type="match status" value="1"/>
</dbReference>
<dbReference type="SUPFAM" id="SSF51366">
    <property type="entry name" value="Ribulose-phoshate binding barrel"/>
    <property type="match status" value="1"/>
</dbReference>
<keyword id="KW-0028">Amino-acid biosynthesis</keyword>
<keyword id="KW-0963">Cytoplasm</keyword>
<keyword id="KW-0368">Histidine biosynthesis</keyword>
<keyword id="KW-0413">Isomerase</keyword>
<comment type="catalytic activity">
    <reaction evidence="1">
        <text>1-(5-phospho-beta-D-ribosyl)-5-[(5-phospho-beta-D-ribosylamino)methylideneamino]imidazole-4-carboxamide = 5-[(5-phospho-1-deoxy-D-ribulos-1-ylimino)methylamino]-1-(5-phospho-beta-D-ribosyl)imidazole-4-carboxamide</text>
        <dbReference type="Rhea" id="RHEA:15469"/>
        <dbReference type="ChEBI" id="CHEBI:58435"/>
        <dbReference type="ChEBI" id="CHEBI:58525"/>
        <dbReference type="EC" id="5.3.1.16"/>
    </reaction>
</comment>
<comment type="pathway">
    <text evidence="1">Amino-acid biosynthesis; L-histidine biosynthesis; L-histidine from 5-phospho-alpha-D-ribose 1-diphosphate: step 4/9.</text>
</comment>
<comment type="subcellular location">
    <subcellularLocation>
        <location evidence="1">Cytoplasm</location>
    </subcellularLocation>
</comment>
<comment type="similarity">
    <text evidence="1">Belongs to the HisA/HisF family.</text>
</comment>
<accession>A0KWB1</accession>
<organism>
    <name type="scientific">Shewanella sp. (strain ANA-3)</name>
    <dbReference type="NCBI Taxonomy" id="94122"/>
    <lineage>
        <taxon>Bacteria</taxon>
        <taxon>Pseudomonadati</taxon>
        <taxon>Pseudomonadota</taxon>
        <taxon>Gammaproteobacteria</taxon>
        <taxon>Alteromonadales</taxon>
        <taxon>Shewanellaceae</taxon>
        <taxon>Shewanella</taxon>
    </lineage>
</organism>
<reference key="1">
    <citation type="submission" date="2006-09" db="EMBL/GenBank/DDBJ databases">
        <title>Complete sequence of chromosome 1 of Shewanella sp. ANA-3.</title>
        <authorList>
            <person name="Copeland A."/>
            <person name="Lucas S."/>
            <person name="Lapidus A."/>
            <person name="Barry K."/>
            <person name="Detter J.C."/>
            <person name="Glavina del Rio T."/>
            <person name="Hammon N."/>
            <person name="Israni S."/>
            <person name="Dalin E."/>
            <person name="Tice H."/>
            <person name="Pitluck S."/>
            <person name="Chertkov O."/>
            <person name="Brettin T."/>
            <person name="Bruce D."/>
            <person name="Han C."/>
            <person name="Tapia R."/>
            <person name="Gilna P."/>
            <person name="Schmutz J."/>
            <person name="Larimer F."/>
            <person name="Land M."/>
            <person name="Hauser L."/>
            <person name="Kyrpides N."/>
            <person name="Kim E."/>
            <person name="Newman D."/>
            <person name="Salticov C."/>
            <person name="Konstantinidis K."/>
            <person name="Klappenback J."/>
            <person name="Tiedje J."/>
            <person name="Richardson P."/>
        </authorList>
    </citation>
    <scope>NUCLEOTIDE SEQUENCE [LARGE SCALE GENOMIC DNA]</scope>
    <source>
        <strain>ANA-3</strain>
    </source>
</reference>
<name>HIS4_SHESA</name>
<protein>
    <recommendedName>
        <fullName evidence="1">1-(5-phosphoribosyl)-5-[(5-phosphoribosylamino)methylideneamino] imidazole-4-carboxamide isomerase</fullName>
        <ecNumber evidence="1">5.3.1.16</ecNumber>
    </recommendedName>
    <alternativeName>
        <fullName evidence="1">Phosphoribosylformimino-5-aminoimidazole carboxamide ribotide isomerase</fullName>
    </alternativeName>
</protein>
<sequence>MIIPAIDLIDGQIVRLYQGDYGQQTTFDLSPQTQLQSYQDQGASWLHIVDLTGAKEPAKRQTALIAKLTAGLNANIQVGGGIRTEEQVAELLSLGVKRVVIGSLAVKEPELVKGWFNKFGSEAICLALDVNINQNGEKIVAVSGWQSGGGKSLESIVEDFSQVGLKHALVTDINRDGTLTGANTALYRELSSHYPHIAWQASGGIATLEDVAAVRDSGAAGIIIGKALLINQFNVAEAIQCWPNE</sequence>
<evidence type="ECO:0000255" key="1">
    <source>
        <dbReference type="HAMAP-Rule" id="MF_01014"/>
    </source>
</evidence>